<organism>
    <name type="scientific">Neisseria meningitidis serogroup C / serotype 2a (strain ATCC 700532 / DSM 15464 / FAM18)</name>
    <dbReference type="NCBI Taxonomy" id="272831"/>
    <lineage>
        <taxon>Bacteria</taxon>
        <taxon>Pseudomonadati</taxon>
        <taxon>Pseudomonadota</taxon>
        <taxon>Betaproteobacteria</taxon>
        <taxon>Neisseriales</taxon>
        <taxon>Neisseriaceae</taxon>
        <taxon>Neisseria</taxon>
    </lineage>
</organism>
<feature type="chain" id="PRO_0000352941" description="Threonylcarbamoyl-AMP synthase">
    <location>
        <begin position="1"/>
        <end position="189"/>
    </location>
</feature>
<feature type="domain" description="YrdC-like" evidence="1">
    <location>
        <begin position="9"/>
        <end position="189"/>
    </location>
</feature>
<reference key="1">
    <citation type="journal article" date="2007" name="PLoS Genet.">
        <title>Meningococcal genetic variation mechanisms viewed through comparative analysis of serogroup C strain FAM18.</title>
        <authorList>
            <person name="Bentley S.D."/>
            <person name="Vernikos G.S."/>
            <person name="Snyder L.A.S."/>
            <person name="Churcher C."/>
            <person name="Arrowsmith C."/>
            <person name="Chillingworth T."/>
            <person name="Cronin A."/>
            <person name="Davis P.H."/>
            <person name="Holroyd N.E."/>
            <person name="Jagels K."/>
            <person name="Maddison M."/>
            <person name="Moule S."/>
            <person name="Rabbinowitsch E."/>
            <person name="Sharp S."/>
            <person name="Unwin L."/>
            <person name="Whitehead S."/>
            <person name="Quail M.A."/>
            <person name="Achtman M."/>
            <person name="Barrell B.G."/>
            <person name="Saunders N.J."/>
            <person name="Parkhill J."/>
        </authorList>
    </citation>
    <scope>NUCLEOTIDE SEQUENCE [LARGE SCALE GENOMIC DNA]</scope>
    <source>
        <strain>ATCC 700532 / DSM 15464 / FAM18</strain>
    </source>
</reference>
<protein>
    <recommendedName>
        <fullName evidence="1">Threonylcarbamoyl-AMP synthase</fullName>
        <shortName evidence="1">TC-AMP synthase</shortName>
        <ecNumber evidence="1">2.7.7.87</ecNumber>
    </recommendedName>
    <alternativeName>
        <fullName evidence="1">L-threonylcarbamoyladenylate synthase</fullName>
    </alternativeName>
    <alternativeName>
        <fullName evidence="1">t(6)A37 threonylcarbamoyladenosine biosynthesis protein TsaC</fullName>
    </alternativeName>
    <alternativeName>
        <fullName evidence="1">tRNA threonylcarbamoyladenosine biosynthesis protein TsaC</fullName>
    </alternativeName>
</protein>
<keyword id="KW-0067">ATP-binding</keyword>
<keyword id="KW-0963">Cytoplasm</keyword>
<keyword id="KW-0547">Nucleotide-binding</keyword>
<keyword id="KW-0548">Nucleotidyltransferase</keyword>
<keyword id="KW-0808">Transferase</keyword>
<keyword id="KW-0819">tRNA processing</keyword>
<comment type="function">
    <text evidence="1">Required for the formation of a threonylcarbamoyl group on adenosine at position 37 (t(6)A37) in tRNAs that read codons beginning with adenine. Catalyzes the conversion of L-threonine, HCO(3)(-)/CO(2) and ATP to give threonylcarbamoyl-AMP (TC-AMP) as the acyladenylate intermediate, with the release of diphosphate.</text>
</comment>
<comment type="catalytic activity">
    <reaction evidence="1">
        <text>L-threonine + hydrogencarbonate + ATP = L-threonylcarbamoyladenylate + diphosphate + H2O</text>
        <dbReference type="Rhea" id="RHEA:36407"/>
        <dbReference type="ChEBI" id="CHEBI:15377"/>
        <dbReference type="ChEBI" id="CHEBI:17544"/>
        <dbReference type="ChEBI" id="CHEBI:30616"/>
        <dbReference type="ChEBI" id="CHEBI:33019"/>
        <dbReference type="ChEBI" id="CHEBI:57926"/>
        <dbReference type="ChEBI" id="CHEBI:73682"/>
        <dbReference type="EC" id="2.7.7.87"/>
    </reaction>
</comment>
<comment type="subcellular location">
    <subcellularLocation>
        <location evidence="1">Cytoplasm</location>
    </subcellularLocation>
</comment>
<comment type="similarity">
    <text evidence="1">Belongs to the SUA5 family. TsaC subfamily.</text>
</comment>
<comment type="sequence caution" evidence="2">
    <conflict type="erroneous initiation">
        <sequence resource="EMBL-CDS" id="CAM11276"/>
    </conflict>
</comment>
<name>TSAC_NEIMF</name>
<gene>
    <name evidence="1" type="primary">tsaC</name>
    <name type="synonym">rimN</name>
    <name type="ordered locus">NMC2128</name>
</gene>
<evidence type="ECO:0000255" key="1">
    <source>
        <dbReference type="HAMAP-Rule" id="MF_01852"/>
    </source>
</evidence>
<evidence type="ECO:0000305" key="2"/>
<accession>A1KWL6</accession>
<proteinExistence type="inferred from homology"/>
<dbReference type="EC" id="2.7.7.87" evidence="1"/>
<dbReference type="EMBL" id="AM421808">
    <property type="protein sequence ID" value="CAM11276.1"/>
    <property type="status" value="ALT_INIT"/>
    <property type="molecule type" value="Genomic_DNA"/>
</dbReference>
<dbReference type="SMR" id="A1KWL6"/>
<dbReference type="KEGG" id="nmc:NMC2128"/>
<dbReference type="HOGENOM" id="CLU_031397_6_1_4"/>
<dbReference type="Proteomes" id="UP000002286">
    <property type="component" value="Chromosome"/>
</dbReference>
<dbReference type="GO" id="GO:0005737">
    <property type="term" value="C:cytoplasm"/>
    <property type="evidence" value="ECO:0007669"/>
    <property type="project" value="UniProtKB-SubCell"/>
</dbReference>
<dbReference type="GO" id="GO:0005524">
    <property type="term" value="F:ATP binding"/>
    <property type="evidence" value="ECO:0007669"/>
    <property type="project" value="UniProtKB-UniRule"/>
</dbReference>
<dbReference type="GO" id="GO:0003725">
    <property type="term" value="F:double-stranded RNA binding"/>
    <property type="evidence" value="ECO:0007669"/>
    <property type="project" value="InterPro"/>
</dbReference>
<dbReference type="GO" id="GO:0061710">
    <property type="term" value="F:L-threonylcarbamoyladenylate synthase"/>
    <property type="evidence" value="ECO:0007669"/>
    <property type="project" value="UniProtKB-EC"/>
</dbReference>
<dbReference type="GO" id="GO:0000049">
    <property type="term" value="F:tRNA binding"/>
    <property type="evidence" value="ECO:0007669"/>
    <property type="project" value="TreeGrafter"/>
</dbReference>
<dbReference type="GO" id="GO:0006450">
    <property type="term" value="P:regulation of translational fidelity"/>
    <property type="evidence" value="ECO:0007669"/>
    <property type="project" value="TreeGrafter"/>
</dbReference>
<dbReference type="GO" id="GO:0002949">
    <property type="term" value="P:tRNA threonylcarbamoyladenosine modification"/>
    <property type="evidence" value="ECO:0007669"/>
    <property type="project" value="UniProtKB-UniRule"/>
</dbReference>
<dbReference type="FunFam" id="3.90.870.10:FF:000004">
    <property type="entry name" value="Threonylcarbamoyl-AMP synthase"/>
    <property type="match status" value="1"/>
</dbReference>
<dbReference type="Gene3D" id="3.90.870.10">
    <property type="entry name" value="DHBP synthase"/>
    <property type="match status" value="1"/>
</dbReference>
<dbReference type="HAMAP" id="MF_01852">
    <property type="entry name" value="TsaC"/>
    <property type="match status" value="1"/>
</dbReference>
<dbReference type="InterPro" id="IPR017945">
    <property type="entry name" value="DHBP_synth_RibB-like_a/b_dom"/>
</dbReference>
<dbReference type="InterPro" id="IPR006070">
    <property type="entry name" value="Sua5-like_dom"/>
</dbReference>
<dbReference type="InterPro" id="IPR023535">
    <property type="entry name" value="TC-AMP_synthase"/>
</dbReference>
<dbReference type="InterPro" id="IPR050156">
    <property type="entry name" value="TC-AMP_synthase_SUA5"/>
</dbReference>
<dbReference type="PANTHER" id="PTHR17490">
    <property type="entry name" value="SUA5"/>
    <property type="match status" value="1"/>
</dbReference>
<dbReference type="PANTHER" id="PTHR17490:SF18">
    <property type="entry name" value="THREONYLCARBAMOYL-AMP SYNTHASE"/>
    <property type="match status" value="1"/>
</dbReference>
<dbReference type="Pfam" id="PF01300">
    <property type="entry name" value="Sua5_yciO_yrdC"/>
    <property type="match status" value="1"/>
</dbReference>
<dbReference type="SUPFAM" id="SSF55821">
    <property type="entry name" value="YrdC/RibB"/>
    <property type="match status" value="1"/>
</dbReference>
<dbReference type="PROSITE" id="PS51163">
    <property type="entry name" value="YRDC"/>
    <property type="match status" value="1"/>
</dbReference>
<sequence length="189" mass="21106">MLFPRIIAASAQRKLSVYLKKGGLVAYPTESCYGLGCLPTLAKALGKLAHLKKRPQHKGMIVIGNQFEQLQPLLQMPSENLQDMLRKEWPAPKTFLLSAKSCVLPELRGKQRSKLAVRVPAHVGARRLCQALQTPLVSTSCNRAGKRACRTEREVRRQFGRDVWIVGGRIGRQKSPSQIIDGETGKRLR</sequence>